<reference key="1">
    <citation type="submission" date="2009-03" db="EMBL/GenBank/DDBJ databases">
        <title>Complete genome sequence of Edwardsiella ictaluri 93-146.</title>
        <authorList>
            <person name="Williams M.L."/>
            <person name="Gillaspy A.F."/>
            <person name="Dyer D.W."/>
            <person name="Thune R.L."/>
            <person name="Waldbieser G.C."/>
            <person name="Schuster S.C."/>
            <person name="Gipson J."/>
            <person name="Zaitshik J."/>
            <person name="Landry C."/>
            <person name="Lawrence M.L."/>
        </authorList>
    </citation>
    <scope>NUCLEOTIDE SEQUENCE [LARGE SCALE GENOMIC DNA]</scope>
    <source>
        <strain>93-146</strain>
    </source>
</reference>
<feature type="chain" id="PRO_1000201680" description="Argininosuccinate synthase">
    <location>
        <begin position="1"/>
        <end position="405"/>
    </location>
</feature>
<feature type="binding site" evidence="1">
    <location>
        <begin position="12"/>
        <end position="20"/>
    </location>
    <ligand>
        <name>ATP</name>
        <dbReference type="ChEBI" id="CHEBI:30616"/>
    </ligand>
</feature>
<feature type="binding site" evidence="1">
    <location>
        <position position="40"/>
    </location>
    <ligand>
        <name>ATP</name>
        <dbReference type="ChEBI" id="CHEBI:30616"/>
    </ligand>
</feature>
<feature type="binding site" evidence="1">
    <location>
        <position position="92"/>
    </location>
    <ligand>
        <name>L-citrulline</name>
        <dbReference type="ChEBI" id="CHEBI:57743"/>
    </ligand>
</feature>
<feature type="binding site" evidence="1">
    <location>
        <position position="97"/>
    </location>
    <ligand>
        <name>L-citrulline</name>
        <dbReference type="ChEBI" id="CHEBI:57743"/>
    </ligand>
</feature>
<feature type="binding site" evidence="1">
    <location>
        <position position="122"/>
    </location>
    <ligand>
        <name>ATP</name>
        <dbReference type="ChEBI" id="CHEBI:30616"/>
    </ligand>
</feature>
<feature type="binding site" evidence="1">
    <location>
        <position position="124"/>
    </location>
    <ligand>
        <name>L-aspartate</name>
        <dbReference type="ChEBI" id="CHEBI:29991"/>
    </ligand>
</feature>
<feature type="binding site" evidence="1">
    <location>
        <position position="128"/>
    </location>
    <ligand>
        <name>L-aspartate</name>
        <dbReference type="ChEBI" id="CHEBI:29991"/>
    </ligand>
</feature>
<feature type="binding site" evidence="1">
    <location>
        <position position="128"/>
    </location>
    <ligand>
        <name>L-citrulline</name>
        <dbReference type="ChEBI" id="CHEBI:57743"/>
    </ligand>
</feature>
<feature type="binding site" evidence="1">
    <location>
        <position position="129"/>
    </location>
    <ligand>
        <name>L-aspartate</name>
        <dbReference type="ChEBI" id="CHEBI:29991"/>
    </ligand>
</feature>
<feature type="binding site" evidence="1">
    <location>
        <position position="132"/>
    </location>
    <ligand>
        <name>L-citrulline</name>
        <dbReference type="ChEBI" id="CHEBI:57743"/>
    </ligand>
</feature>
<feature type="binding site" evidence="1">
    <location>
        <position position="181"/>
    </location>
    <ligand>
        <name>L-citrulline</name>
        <dbReference type="ChEBI" id="CHEBI:57743"/>
    </ligand>
</feature>
<feature type="binding site" evidence="1">
    <location>
        <position position="190"/>
    </location>
    <ligand>
        <name>L-citrulline</name>
        <dbReference type="ChEBI" id="CHEBI:57743"/>
    </ligand>
</feature>
<feature type="binding site" evidence="1">
    <location>
        <position position="266"/>
    </location>
    <ligand>
        <name>L-citrulline</name>
        <dbReference type="ChEBI" id="CHEBI:57743"/>
    </ligand>
</feature>
<feature type="binding site" evidence="1">
    <location>
        <position position="278"/>
    </location>
    <ligand>
        <name>L-citrulline</name>
        <dbReference type="ChEBI" id="CHEBI:57743"/>
    </ligand>
</feature>
<organism>
    <name type="scientific">Edwardsiella ictaluri (strain 93-146)</name>
    <dbReference type="NCBI Taxonomy" id="634503"/>
    <lineage>
        <taxon>Bacteria</taxon>
        <taxon>Pseudomonadati</taxon>
        <taxon>Pseudomonadota</taxon>
        <taxon>Gammaproteobacteria</taxon>
        <taxon>Enterobacterales</taxon>
        <taxon>Hafniaceae</taxon>
        <taxon>Edwardsiella</taxon>
    </lineage>
</organism>
<keyword id="KW-0028">Amino-acid biosynthesis</keyword>
<keyword id="KW-0055">Arginine biosynthesis</keyword>
<keyword id="KW-0067">ATP-binding</keyword>
<keyword id="KW-0963">Cytoplasm</keyword>
<keyword id="KW-0436">Ligase</keyword>
<keyword id="KW-0547">Nucleotide-binding</keyword>
<protein>
    <recommendedName>
        <fullName evidence="1">Argininosuccinate synthase</fullName>
        <ecNumber evidence="1">6.3.4.5</ecNumber>
    </recommendedName>
    <alternativeName>
        <fullName evidence="1">Citrulline--aspartate ligase</fullName>
    </alternativeName>
</protein>
<accession>C5BC58</accession>
<gene>
    <name evidence="1" type="primary">argG</name>
    <name type="ordered locus">NT01EI_3845</name>
</gene>
<evidence type="ECO:0000255" key="1">
    <source>
        <dbReference type="HAMAP-Rule" id="MF_00005"/>
    </source>
</evidence>
<sequence>MATQSISKIVLAYSGGLDTSAIIPWLKENYGDCEVIAFVADIGQEREDLVGIEQKALRSGAASCYVVDLRETFIKDYVYPVLKSGALYEGSYLLGTSMARPLIAKAQVELALELGADALCHGATGKGNDQVRFETTYTALAPQLQVVAPWREWDLRSREALLDYLKGRDIPTTATLEKIYSRDANAWHISTEGGVLESPWSPANQDCWVWTCAPEEAPDQPELVTVGVEKGEVVSVNGVAMTPFGCLQALNALGTRHGVGRIDIVENRLVGIKSRGCYETPGGTIMMAALRGVEQLVLDRDSFQWREKLGQEMSYVVYDGRWFAPLRQSLQAAADALADAVSGEVVIKLYKGQAIAIQKKSVNSLYNEAFATFGEDDVYDHSHAGGFIRLFSLSSRIRALNSAKQ</sequence>
<comment type="catalytic activity">
    <reaction evidence="1">
        <text>L-citrulline + L-aspartate + ATP = 2-(N(omega)-L-arginino)succinate + AMP + diphosphate + H(+)</text>
        <dbReference type="Rhea" id="RHEA:10932"/>
        <dbReference type="ChEBI" id="CHEBI:15378"/>
        <dbReference type="ChEBI" id="CHEBI:29991"/>
        <dbReference type="ChEBI" id="CHEBI:30616"/>
        <dbReference type="ChEBI" id="CHEBI:33019"/>
        <dbReference type="ChEBI" id="CHEBI:57472"/>
        <dbReference type="ChEBI" id="CHEBI:57743"/>
        <dbReference type="ChEBI" id="CHEBI:456215"/>
        <dbReference type="EC" id="6.3.4.5"/>
    </reaction>
</comment>
<comment type="pathway">
    <text evidence="1">Amino-acid biosynthesis; L-arginine biosynthesis; L-arginine from L-ornithine and carbamoyl phosphate: step 2/3.</text>
</comment>
<comment type="subunit">
    <text evidence="1">Homotetramer.</text>
</comment>
<comment type="subcellular location">
    <subcellularLocation>
        <location evidence="1">Cytoplasm</location>
    </subcellularLocation>
</comment>
<comment type="similarity">
    <text evidence="1">Belongs to the argininosuccinate synthase family. Type 1 subfamily.</text>
</comment>
<proteinExistence type="inferred from homology"/>
<dbReference type="EC" id="6.3.4.5" evidence="1"/>
<dbReference type="EMBL" id="CP001600">
    <property type="protein sequence ID" value="ACR70964.1"/>
    <property type="molecule type" value="Genomic_DNA"/>
</dbReference>
<dbReference type="RefSeq" id="WP_015872995.1">
    <property type="nucleotide sequence ID" value="NZ_CP169062.1"/>
</dbReference>
<dbReference type="SMR" id="C5BC58"/>
<dbReference type="STRING" id="67780.B6E78_10790"/>
<dbReference type="KEGG" id="eic:NT01EI_3845"/>
<dbReference type="PATRIC" id="fig|634503.3.peg.3431"/>
<dbReference type="HOGENOM" id="CLU_032784_4_2_6"/>
<dbReference type="OrthoDB" id="9801641at2"/>
<dbReference type="UniPathway" id="UPA00068">
    <property type="reaction ID" value="UER00113"/>
</dbReference>
<dbReference type="Proteomes" id="UP000001485">
    <property type="component" value="Chromosome"/>
</dbReference>
<dbReference type="GO" id="GO:0005737">
    <property type="term" value="C:cytoplasm"/>
    <property type="evidence" value="ECO:0007669"/>
    <property type="project" value="UniProtKB-SubCell"/>
</dbReference>
<dbReference type="GO" id="GO:0004055">
    <property type="term" value="F:argininosuccinate synthase activity"/>
    <property type="evidence" value="ECO:0007669"/>
    <property type="project" value="UniProtKB-UniRule"/>
</dbReference>
<dbReference type="GO" id="GO:0005524">
    <property type="term" value="F:ATP binding"/>
    <property type="evidence" value="ECO:0007669"/>
    <property type="project" value="UniProtKB-UniRule"/>
</dbReference>
<dbReference type="GO" id="GO:0000053">
    <property type="term" value="P:argininosuccinate metabolic process"/>
    <property type="evidence" value="ECO:0007669"/>
    <property type="project" value="TreeGrafter"/>
</dbReference>
<dbReference type="GO" id="GO:0006526">
    <property type="term" value="P:L-arginine biosynthetic process"/>
    <property type="evidence" value="ECO:0007669"/>
    <property type="project" value="UniProtKB-UniRule"/>
</dbReference>
<dbReference type="GO" id="GO:0000050">
    <property type="term" value="P:urea cycle"/>
    <property type="evidence" value="ECO:0007669"/>
    <property type="project" value="TreeGrafter"/>
</dbReference>
<dbReference type="CDD" id="cd01999">
    <property type="entry name" value="ASS"/>
    <property type="match status" value="1"/>
</dbReference>
<dbReference type="FunFam" id="3.40.50.620:FF:000019">
    <property type="entry name" value="Argininosuccinate synthase"/>
    <property type="match status" value="1"/>
</dbReference>
<dbReference type="FunFam" id="3.90.1260.10:FF:000007">
    <property type="entry name" value="Argininosuccinate synthase"/>
    <property type="match status" value="1"/>
</dbReference>
<dbReference type="Gene3D" id="3.90.1260.10">
    <property type="entry name" value="Argininosuccinate synthetase, chain A, domain 2"/>
    <property type="match status" value="1"/>
</dbReference>
<dbReference type="Gene3D" id="3.40.50.620">
    <property type="entry name" value="HUPs"/>
    <property type="match status" value="1"/>
</dbReference>
<dbReference type="Gene3D" id="1.20.5.470">
    <property type="entry name" value="Single helix bin"/>
    <property type="match status" value="1"/>
</dbReference>
<dbReference type="HAMAP" id="MF_00005">
    <property type="entry name" value="Arg_succ_synth_type1"/>
    <property type="match status" value="1"/>
</dbReference>
<dbReference type="InterPro" id="IPR048268">
    <property type="entry name" value="Arginosuc_syn_C"/>
</dbReference>
<dbReference type="InterPro" id="IPR048267">
    <property type="entry name" value="Arginosuc_syn_N"/>
</dbReference>
<dbReference type="InterPro" id="IPR001518">
    <property type="entry name" value="Arginosuc_synth"/>
</dbReference>
<dbReference type="InterPro" id="IPR018223">
    <property type="entry name" value="Arginosuc_synth_CS"/>
</dbReference>
<dbReference type="InterPro" id="IPR023434">
    <property type="entry name" value="Arginosuc_synth_type_1_subfam"/>
</dbReference>
<dbReference type="InterPro" id="IPR024074">
    <property type="entry name" value="AS_cat/multimer_dom_body"/>
</dbReference>
<dbReference type="InterPro" id="IPR014729">
    <property type="entry name" value="Rossmann-like_a/b/a_fold"/>
</dbReference>
<dbReference type="NCBIfam" id="TIGR00032">
    <property type="entry name" value="argG"/>
    <property type="match status" value="1"/>
</dbReference>
<dbReference type="NCBIfam" id="NF001770">
    <property type="entry name" value="PRK00509.1"/>
    <property type="match status" value="1"/>
</dbReference>
<dbReference type="PANTHER" id="PTHR11587">
    <property type="entry name" value="ARGININOSUCCINATE SYNTHASE"/>
    <property type="match status" value="1"/>
</dbReference>
<dbReference type="PANTHER" id="PTHR11587:SF2">
    <property type="entry name" value="ARGININOSUCCINATE SYNTHASE"/>
    <property type="match status" value="1"/>
</dbReference>
<dbReference type="Pfam" id="PF20979">
    <property type="entry name" value="Arginosuc_syn_C"/>
    <property type="match status" value="1"/>
</dbReference>
<dbReference type="Pfam" id="PF00764">
    <property type="entry name" value="Arginosuc_synth"/>
    <property type="match status" value="1"/>
</dbReference>
<dbReference type="SUPFAM" id="SSF52402">
    <property type="entry name" value="Adenine nucleotide alpha hydrolases-like"/>
    <property type="match status" value="1"/>
</dbReference>
<dbReference type="SUPFAM" id="SSF69864">
    <property type="entry name" value="Argininosuccinate synthetase, C-terminal domain"/>
    <property type="match status" value="1"/>
</dbReference>
<dbReference type="PROSITE" id="PS00564">
    <property type="entry name" value="ARGININOSUCCIN_SYN_1"/>
    <property type="match status" value="1"/>
</dbReference>
<dbReference type="PROSITE" id="PS00565">
    <property type="entry name" value="ARGININOSUCCIN_SYN_2"/>
    <property type="match status" value="1"/>
</dbReference>
<name>ASSY_EDWI9</name>